<organism>
    <name type="scientific">Salmonella paratyphi A (strain AKU_12601)</name>
    <dbReference type="NCBI Taxonomy" id="554290"/>
    <lineage>
        <taxon>Bacteria</taxon>
        <taxon>Pseudomonadati</taxon>
        <taxon>Pseudomonadota</taxon>
        <taxon>Gammaproteobacteria</taxon>
        <taxon>Enterobacterales</taxon>
        <taxon>Enterobacteriaceae</taxon>
        <taxon>Salmonella</taxon>
    </lineage>
</organism>
<sequence length="131" mass="14903">MAQIPARGDCSRQLTRKQAGDAWEAAARRWLESKGLRFIAANVRERGGEIDLIMRDGKTTVFVEVRYRRSGLYGGAAASVTRSKQHKLLHTARLWLARQNGSFDTVDCRFDVLAFTGNEIEWFRDAFNDHS</sequence>
<feature type="chain" id="PRO_1000091263" description="UPF0102 protein YraN">
    <location>
        <begin position="1"/>
        <end position="131"/>
    </location>
</feature>
<reference key="1">
    <citation type="journal article" date="2009" name="BMC Genomics">
        <title>Pseudogene accumulation in the evolutionary histories of Salmonella enterica serovars Paratyphi A and Typhi.</title>
        <authorList>
            <person name="Holt K.E."/>
            <person name="Thomson N.R."/>
            <person name="Wain J."/>
            <person name="Langridge G.C."/>
            <person name="Hasan R."/>
            <person name="Bhutta Z.A."/>
            <person name="Quail M.A."/>
            <person name="Norbertczak H."/>
            <person name="Walker D."/>
            <person name="Simmonds M."/>
            <person name="White B."/>
            <person name="Bason N."/>
            <person name="Mungall K."/>
            <person name="Dougan G."/>
            <person name="Parkhill J."/>
        </authorList>
    </citation>
    <scope>NUCLEOTIDE SEQUENCE [LARGE SCALE GENOMIC DNA]</scope>
    <source>
        <strain>AKU_12601</strain>
    </source>
</reference>
<comment type="similarity">
    <text evidence="1">Belongs to the UPF0102 family.</text>
</comment>
<gene>
    <name evidence="1" type="primary">yraN</name>
    <name type="ordered locus">SSPA2926</name>
</gene>
<dbReference type="EMBL" id="FM200053">
    <property type="protein sequence ID" value="CAR61174.1"/>
    <property type="molecule type" value="Genomic_DNA"/>
</dbReference>
<dbReference type="RefSeq" id="WP_000057285.1">
    <property type="nucleotide sequence ID" value="NC_011147.1"/>
</dbReference>
<dbReference type="SMR" id="B5BGH7"/>
<dbReference type="KEGG" id="sek:SSPA2926"/>
<dbReference type="HOGENOM" id="CLU_115353_1_0_6"/>
<dbReference type="Proteomes" id="UP000001869">
    <property type="component" value="Chromosome"/>
</dbReference>
<dbReference type="GO" id="GO:0003676">
    <property type="term" value="F:nucleic acid binding"/>
    <property type="evidence" value="ECO:0007669"/>
    <property type="project" value="InterPro"/>
</dbReference>
<dbReference type="CDD" id="cd20736">
    <property type="entry name" value="PoNe_Nuclease"/>
    <property type="match status" value="1"/>
</dbReference>
<dbReference type="Gene3D" id="3.40.1350.10">
    <property type="match status" value="1"/>
</dbReference>
<dbReference type="HAMAP" id="MF_00048">
    <property type="entry name" value="UPF0102"/>
    <property type="match status" value="1"/>
</dbReference>
<dbReference type="InterPro" id="IPR011335">
    <property type="entry name" value="Restrct_endonuc-II-like"/>
</dbReference>
<dbReference type="InterPro" id="IPR011856">
    <property type="entry name" value="tRNA_endonuc-like_dom_sf"/>
</dbReference>
<dbReference type="InterPro" id="IPR003509">
    <property type="entry name" value="UPF0102_YraN-like"/>
</dbReference>
<dbReference type="NCBIfam" id="NF009150">
    <property type="entry name" value="PRK12497.1-3"/>
    <property type="match status" value="1"/>
</dbReference>
<dbReference type="NCBIfam" id="TIGR00252">
    <property type="entry name" value="YraN family protein"/>
    <property type="match status" value="1"/>
</dbReference>
<dbReference type="PANTHER" id="PTHR34039">
    <property type="entry name" value="UPF0102 PROTEIN YRAN"/>
    <property type="match status" value="1"/>
</dbReference>
<dbReference type="PANTHER" id="PTHR34039:SF1">
    <property type="entry name" value="UPF0102 PROTEIN YRAN"/>
    <property type="match status" value="1"/>
</dbReference>
<dbReference type="Pfam" id="PF02021">
    <property type="entry name" value="UPF0102"/>
    <property type="match status" value="1"/>
</dbReference>
<dbReference type="SUPFAM" id="SSF52980">
    <property type="entry name" value="Restriction endonuclease-like"/>
    <property type="match status" value="1"/>
</dbReference>
<proteinExistence type="inferred from homology"/>
<name>YRAN_SALPK</name>
<protein>
    <recommendedName>
        <fullName evidence="1">UPF0102 protein YraN</fullName>
    </recommendedName>
</protein>
<evidence type="ECO:0000255" key="1">
    <source>
        <dbReference type="HAMAP-Rule" id="MF_00048"/>
    </source>
</evidence>
<accession>B5BGH7</accession>